<keyword id="KW-1185">Reference proteome</keyword>
<evidence type="ECO:0000305" key="1"/>
<feature type="chain" id="PRO_0000064671" description="Indole-3-acetic acid-induced protein ARG7">
    <location>
        <begin position="1"/>
        <end position="92"/>
    </location>
</feature>
<accession>P32295</accession>
<name>ARG7_VIGRR</name>
<protein>
    <recommendedName>
        <fullName>Indole-3-acetic acid-induced protein ARG7</fullName>
    </recommendedName>
</protein>
<reference key="1">
    <citation type="journal article" date="1992" name="Plant Cell Physiol.">
        <title>cDNA cloning of indole-3-acetic acid regulated genes: Aux22 and SAUR from mung bean (Vigna radiata) hypocotyl tissue.</title>
        <authorList>
            <person name="Yamamoto K.T."/>
            <person name="Mori H."/>
            <person name="Imaseki H."/>
        </authorList>
    </citation>
    <scope>NUCLEOTIDE SEQUENCE [MRNA]</scope>
    <source>
        <tissue>Hypocotyl</tissue>
    </source>
</reference>
<organism>
    <name type="scientific">Vigna radiata var. radiata</name>
    <name type="common">Mung bean</name>
    <name type="synonym">Phaseolus aureus</name>
    <dbReference type="NCBI Taxonomy" id="3916"/>
    <lineage>
        <taxon>Eukaryota</taxon>
        <taxon>Viridiplantae</taxon>
        <taxon>Streptophyta</taxon>
        <taxon>Embryophyta</taxon>
        <taxon>Tracheophyta</taxon>
        <taxon>Spermatophyta</taxon>
        <taxon>Magnoliopsida</taxon>
        <taxon>eudicotyledons</taxon>
        <taxon>Gunneridae</taxon>
        <taxon>Pentapetalae</taxon>
        <taxon>rosids</taxon>
        <taxon>fabids</taxon>
        <taxon>Fabales</taxon>
        <taxon>Fabaceae</taxon>
        <taxon>Papilionoideae</taxon>
        <taxon>50 kb inversion clade</taxon>
        <taxon>NPAAA clade</taxon>
        <taxon>indigoferoid/millettioid clade</taxon>
        <taxon>Phaseoleae</taxon>
        <taxon>Vigna</taxon>
    </lineage>
</organism>
<proteinExistence type="evidence at transcript level"/>
<sequence length="92" mass="10212">MGFRLPGIRKTLSARNEASSKVLDAPKGYLAVYVGENMKRFVIPVSHLNQPLFQDLLSQAEEEFGYDHPMGGLTIPCSEDLFQHITSCLSAQ</sequence>
<comment type="developmental stage">
    <text>Found in elongating hypocotyls.</text>
</comment>
<comment type="induction">
    <text>By auxin and cycloheximide.</text>
</comment>
<comment type="similarity">
    <text evidence="1">Belongs to the ARG7 family.</text>
</comment>
<dbReference type="EMBL" id="D14414">
    <property type="protein sequence ID" value="BAA03310.1"/>
    <property type="molecule type" value="mRNA"/>
</dbReference>
<dbReference type="PIR" id="T10942">
    <property type="entry name" value="T10942"/>
</dbReference>
<dbReference type="SMR" id="P32295"/>
<dbReference type="STRING" id="3916.P32295"/>
<dbReference type="Proteomes" id="UP000087766">
    <property type="component" value="Unplaced"/>
</dbReference>
<dbReference type="GO" id="GO:0009733">
    <property type="term" value="P:response to auxin"/>
    <property type="evidence" value="ECO:0007669"/>
    <property type="project" value="InterPro"/>
</dbReference>
<dbReference type="InterPro" id="IPR003676">
    <property type="entry name" value="SAUR_fam"/>
</dbReference>
<dbReference type="PANTHER" id="PTHR31929">
    <property type="entry name" value="SAUR-LIKE AUXIN-RESPONSIVE PROTEIN FAMILY-RELATED"/>
    <property type="match status" value="1"/>
</dbReference>
<dbReference type="Pfam" id="PF02519">
    <property type="entry name" value="Auxin_inducible"/>
    <property type="match status" value="1"/>
</dbReference>
<gene>
    <name type="primary">ARG7</name>
</gene>